<protein>
    <recommendedName>
        <fullName>Protein odd-skipped-related 1</fullName>
    </recommendedName>
</protein>
<evidence type="ECO:0000250" key="1"/>
<evidence type="ECO:0000250" key="2">
    <source>
        <dbReference type="UniProtKB" id="Q9WVG7"/>
    </source>
</evidence>
<evidence type="ECO:0000255" key="3">
    <source>
        <dbReference type="PROSITE-ProRule" id="PRU00042"/>
    </source>
</evidence>
<evidence type="ECO:0000305" key="4"/>
<accession>B0K011</accession>
<keyword id="KW-0479">Metal-binding</keyword>
<keyword id="KW-0488">Methylation</keyword>
<keyword id="KW-0539">Nucleus</keyword>
<keyword id="KW-1185">Reference proteome</keyword>
<keyword id="KW-0677">Repeat</keyword>
<keyword id="KW-0804">Transcription</keyword>
<keyword id="KW-0805">Transcription regulation</keyword>
<keyword id="KW-0862">Zinc</keyword>
<keyword id="KW-0863">Zinc-finger</keyword>
<reference key="1">
    <citation type="submission" date="2005-07" db="EMBL/GenBank/DDBJ databases">
        <authorList>
            <person name="Mural R.J."/>
            <person name="Adams M.D."/>
            <person name="Myers E.W."/>
            <person name="Smith H.O."/>
            <person name="Venter J.C."/>
        </authorList>
    </citation>
    <scope>NUCLEOTIDE SEQUENCE [LARGE SCALE GENOMIC DNA]</scope>
    <source>
        <strain>Brown Norway</strain>
    </source>
</reference>
<reference key="2">
    <citation type="journal article" date="2004" name="Genome Res.">
        <title>The status, quality, and expansion of the NIH full-length cDNA project: the Mammalian Gene Collection (MGC).</title>
        <authorList>
            <consortium name="The MGC Project Team"/>
        </authorList>
    </citation>
    <scope>NUCLEOTIDE SEQUENCE [LARGE SCALE MRNA]</scope>
    <source>
        <tissue>Brain</tissue>
    </source>
</reference>
<name>OSR1_RAT</name>
<dbReference type="EMBL" id="CH473947">
    <property type="protein sequence ID" value="EDM03089.1"/>
    <property type="molecule type" value="Genomic_DNA"/>
</dbReference>
<dbReference type="EMBL" id="BC159410">
    <property type="protein sequence ID" value="AAI59411.1"/>
    <property type="molecule type" value="mRNA"/>
</dbReference>
<dbReference type="RefSeq" id="NP_001100186.1">
    <property type="nucleotide sequence ID" value="NM_001106716.4"/>
</dbReference>
<dbReference type="RefSeq" id="XP_006239948.1">
    <property type="nucleotide sequence ID" value="XM_006239886.2"/>
</dbReference>
<dbReference type="RefSeq" id="XP_038967869.1">
    <property type="nucleotide sequence ID" value="XM_039111941.2"/>
</dbReference>
<dbReference type="SMR" id="B0K011"/>
<dbReference type="FunCoup" id="B0K011">
    <property type="interactions" value="22"/>
</dbReference>
<dbReference type="STRING" id="10116.ENSRNOP00000005666"/>
<dbReference type="PhosphoSitePlus" id="B0K011"/>
<dbReference type="PaxDb" id="10116-ENSRNOP00000005666"/>
<dbReference type="GeneID" id="298878"/>
<dbReference type="KEGG" id="rno:298878"/>
<dbReference type="AGR" id="RGD:1311807"/>
<dbReference type="CTD" id="130497"/>
<dbReference type="RGD" id="1311807">
    <property type="gene designation" value="Osr1"/>
</dbReference>
<dbReference type="VEuPathDB" id="HostDB:ENSRNOG00000004210"/>
<dbReference type="eggNOG" id="KOG1721">
    <property type="taxonomic scope" value="Eukaryota"/>
</dbReference>
<dbReference type="HOGENOM" id="CLU_051854_0_0_1"/>
<dbReference type="InParanoid" id="B0K011"/>
<dbReference type="OrthoDB" id="19217at9989"/>
<dbReference type="PhylomeDB" id="B0K011"/>
<dbReference type="TreeFam" id="TF350876"/>
<dbReference type="PRO" id="PR:B0K011"/>
<dbReference type="Proteomes" id="UP000002494">
    <property type="component" value="Chromosome 6"/>
</dbReference>
<dbReference type="Proteomes" id="UP000234681">
    <property type="component" value="Chromosome 6"/>
</dbReference>
<dbReference type="Bgee" id="ENSRNOG00000004210">
    <property type="expression patterns" value="Expressed in skeletal muscle tissue and 17 other cell types or tissues"/>
</dbReference>
<dbReference type="GO" id="GO:0005938">
    <property type="term" value="C:cell cortex"/>
    <property type="evidence" value="ECO:0000314"/>
    <property type="project" value="ParkinsonsUK-UCL"/>
</dbReference>
<dbReference type="GO" id="GO:0005829">
    <property type="term" value="C:cytosol"/>
    <property type="evidence" value="ECO:0000314"/>
    <property type="project" value="ParkinsonsUK-UCL"/>
</dbReference>
<dbReference type="GO" id="GO:0005634">
    <property type="term" value="C:nucleus"/>
    <property type="evidence" value="ECO:0000250"/>
    <property type="project" value="UniProtKB"/>
</dbReference>
<dbReference type="GO" id="GO:0000981">
    <property type="term" value="F:DNA-binding transcription factor activity, RNA polymerase II-specific"/>
    <property type="evidence" value="ECO:0000318"/>
    <property type="project" value="GO_Central"/>
</dbReference>
<dbReference type="GO" id="GO:0000977">
    <property type="term" value="F:RNA polymerase II transcription regulatory region sequence-specific DNA binding"/>
    <property type="evidence" value="ECO:0000318"/>
    <property type="project" value="GO_Central"/>
</dbReference>
<dbReference type="GO" id="GO:1990837">
    <property type="term" value="F:sequence-specific double-stranded DNA binding"/>
    <property type="evidence" value="ECO:0000266"/>
    <property type="project" value="RGD"/>
</dbReference>
<dbReference type="GO" id="GO:0008270">
    <property type="term" value="F:zinc ion binding"/>
    <property type="evidence" value="ECO:0007669"/>
    <property type="project" value="UniProtKB-KW"/>
</dbReference>
<dbReference type="GO" id="GO:0030154">
    <property type="term" value="P:cell differentiation"/>
    <property type="evidence" value="ECO:0000266"/>
    <property type="project" value="RGD"/>
</dbReference>
<dbReference type="GO" id="GO:0072111">
    <property type="term" value="P:cell proliferation involved in kidney development"/>
    <property type="evidence" value="ECO:0000250"/>
    <property type="project" value="UniProtKB"/>
</dbReference>
<dbReference type="GO" id="GO:0071300">
    <property type="term" value="P:cellular response to retinoic acid"/>
    <property type="evidence" value="ECO:0000266"/>
    <property type="project" value="RGD"/>
</dbReference>
<dbReference type="GO" id="GO:0002062">
    <property type="term" value="P:chondrocyte differentiation"/>
    <property type="evidence" value="ECO:0000266"/>
    <property type="project" value="RGD"/>
</dbReference>
<dbReference type="GO" id="GO:0042733">
    <property type="term" value="P:embryonic digit morphogenesis"/>
    <property type="evidence" value="ECO:0000266"/>
    <property type="project" value="RGD"/>
</dbReference>
<dbReference type="GO" id="GO:0035115">
    <property type="term" value="P:embryonic forelimb morphogenesis"/>
    <property type="evidence" value="ECO:0000266"/>
    <property type="project" value="RGD"/>
</dbReference>
<dbReference type="GO" id="GO:0035116">
    <property type="term" value="P:embryonic hindlimb morphogenesis"/>
    <property type="evidence" value="ECO:0000266"/>
    <property type="project" value="RGD"/>
</dbReference>
<dbReference type="GO" id="GO:0072498">
    <property type="term" value="P:embryonic skeletal joint development"/>
    <property type="evidence" value="ECO:0000266"/>
    <property type="project" value="RGD"/>
</dbReference>
<dbReference type="GO" id="GO:0060272">
    <property type="term" value="P:embryonic skeletal joint morphogenesis"/>
    <property type="evidence" value="ECO:0000266"/>
    <property type="project" value="RGD"/>
</dbReference>
<dbReference type="GO" id="GO:0036023">
    <property type="term" value="P:embryonic skeletal limb joint morphogenesis"/>
    <property type="evidence" value="ECO:0000266"/>
    <property type="project" value="RGD"/>
</dbReference>
<dbReference type="GO" id="GO:0008406">
    <property type="term" value="P:gonad development"/>
    <property type="evidence" value="ECO:0000266"/>
    <property type="project" value="RGD"/>
</dbReference>
<dbReference type="GO" id="GO:0007507">
    <property type="term" value="P:heart development"/>
    <property type="evidence" value="ECO:0000250"/>
    <property type="project" value="UniProtKB"/>
</dbReference>
<dbReference type="GO" id="GO:0048389">
    <property type="term" value="P:intermediate mesoderm development"/>
    <property type="evidence" value="ECO:0000266"/>
    <property type="project" value="RGD"/>
</dbReference>
<dbReference type="GO" id="GO:0072143">
    <property type="term" value="P:mesangial cell development"/>
    <property type="evidence" value="ECO:0000250"/>
    <property type="project" value="UniProtKB"/>
</dbReference>
<dbReference type="GO" id="GO:0072180">
    <property type="term" value="P:mesonephric duct morphogenesis"/>
    <property type="evidence" value="ECO:0000250"/>
    <property type="project" value="UniProtKB"/>
</dbReference>
<dbReference type="GO" id="GO:0001823">
    <property type="term" value="P:mesonephros development"/>
    <property type="evidence" value="ECO:0000250"/>
    <property type="project" value="UniProtKB"/>
</dbReference>
<dbReference type="GO" id="GO:0090094">
    <property type="term" value="P:metanephric cap mesenchymal cell proliferation involved in metanephros development"/>
    <property type="evidence" value="ECO:0000250"/>
    <property type="project" value="UniProtKB"/>
</dbReference>
<dbReference type="GO" id="GO:0072207">
    <property type="term" value="P:metanephric epithelium development"/>
    <property type="evidence" value="ECO:0000250"/>
    <property type="project" value="UniProtKB"/>
</dbReference>
<dbReference type="GO" id="GO:0072239">
    <property type="term" value="P:metanephric glomerulus vasculature development"/>
    <property type="evidence" value="ECO:0000250"/>
    <property type="project" value="UniProtKB"/>
</dbReference>
<dbReference type="GO" id="GO:0072259">
    <property type="term" value="P:metanephric interstitial fibroblast development"/>
    <property type="evidence" value="ECO:0000250"/>
    <property type="project" value="UniProtKB"/>
</dbReference>
<dbReference type="GO" id="GO:0072162">
    <property type="term" value="P:metanephric mesenchymal cell differentiation"/>
    <property type="evidence" value="ECO:0000250"/>
    <property type="project" value="UniProtKB"/>
</dbReference>
<dbReference type="GO" id="GO:0072075">
    <property type="term" value="P:metanephric mesenchyme development"/>
    <property type="evidence" value="ECO:0000250"/>
    <property type="project" value="UniProtKB"/>
</dbReference>
<dbReference type="GO" id="GO:0072133">
    <property type="term" value="P:metanephric mesenchyme morphogenesis"/>
    <property type="evidence" value="ECO:0000250"/>
    <property type="project" value="UniProtKB"/>
</dbReference>
<dbReference type="GO" id="GO:0072234">
    <property type="term" value="P:metanephric nephron tubule development"/>
    <property type="evidence" value="ECO:0000250"/>
    <property type="project" value="UniProtKB"/>
</dbReference>
<dbReference type="GO" id="GO:0072208">
    <property type="term" value="P:metanephric smooth muscle tissue development"/>
    <property type="evidence" value="ECO:0000250"/>
    <property type="project" value="UniProtKB"/>
</dbReference>
<dbReference type="GO" id="GO:0001656">
    <property type="term" value="P:metanephros development"/>
    <property type="evidence" value="ECO:0000266"/>
    <property type="project" value="RGD"/>
</dbReference>
<dbReference type="GO" id="GO:0042474">
    <property type="term" value="P:middle ear morphogenesis"/>
    <property type="evidence" value="ECO:0000250"/>
    <property type="project" value="UniProtKB"/>
</dbReference>
<dbReference type="GO" id="GO:0043066">
    <property type="term" value="P:negative regulation of apoptotic process"/>
    <property type="evidence" value="ECO:0000250"/>
    <property type="project" value="UniProtKB"/>
</dbReference>
<dbReference type="GO" id="GO:0030857">
    <property type="term" value="P:negative regulation of epithelial cell differentiation"/>
    <property type="evidence" value="ECO:0000250"/>
    <property type="project" value="UniProtKB"/>
</dbReference>
<dbReference type="GO" id="GO:0072183">
    <property type="term" value="P:negative regulation of nephron tubule epithelial cell differentiation"/>
    <property type="evidence" value="ECO:0000250"/>
    <property type="project" value="UniProtKB"/>
</dbReference>
<dbReference type="GO" id="GO:0000122">
    <property type="term" value="P:negative regulation of transcription by RNA polymerase II"/>
    <property type="evidence" value="ECO:0000266"/>
    <property type="project" value="RGD"/>
</dbReference>
<dbReference type="GO" id="GO:0042476">
    <property type="term" value="P:odontogenesis"/>
    <property type="evidence" value="ECO:0000250"/>
    <property type="project" value="UniProtKB"/>
</dbReference>
<dbReference type="GO" id="GO:0072268">
    <property type="term" value="P:pattern specification involved in metanephros development"/>
    <property type="evidence" value="ECO:0000250"/>
    <property type="project" value="UniProtKB"/>
</dbReference>
<dbReference type="GO" id="GO:0007389">
    <property type="term" value="P:pattern specification process"/>
    <property type="evidence" value="ECO:0000318"/>
    <property type="project" value="GO_Central"/>
</dbReference>
<dbReference type="GO" id="GO:0030501">
    <property type="term" value="P:positive regulation of bone mineralization"/>
    <property type="evidence" value="ECO:0000266"/>
    <property type="project" value="RGD"/>
</dbReference>
<dbReference type="GO" id="GO:0050679">
    <property type="term" value="P:positive regulation of epithelial cell proliferation"/>
    <property type="evidence" value="ECO:0000250"/>
    <property type="project" value="UniProtKB"/>
</dbReference>
<dbReference type="GO" id="GO:2000543">
    <property type="term" value="P:positive regulation of gastrulation"/>
    <property type="evidence" value="ECO:0000250"/>
    <property type="project" value="UniProtKB"/>
</dbReference>
<dbReference type="GO" id="GO:0010628">
    <property type="term" value="P:positive regulation of gene expression"/>
    <property type="evidence" value="ECO:0000250"/>
    <property type="project" value="UniProtKB"/>
</dbReference>
<dbReference type="GO" id="GO:0045944">
    <property type="term" value="P:positive regulation of transcription by RNA polymerase II"/>
    <property type="evidence" value="ECO:0000266"/>
    <property type="project" value="RGD"/>
</dbReference>
<dbReference type="GO" id="GO:0072166">
    <property type="term" value="P:posterior mesonephric tubule development"/>
    <property type="evidence" value="ECO:0000250"/>
    <property type="project" value="UniProtKB"/>
</dbReference>
<dbReference type="GO" id="GO:0048793">
    <property type="term" value="P:pronephros development"/>
    <property type="evidence" value="ECO:0000250"/>
    <property type="project" value="UniProtKB"/>
</dbReference>
<dbReference type="GO" id="GO:0072184">
    <property type="term" value="P:renal vesicle progenitor cell differentiation"/>
    <property type="evidence" value="ECO:0000250"/>
    <property type="project" value="UniProtKB"/>
</dbReference>
<dbReference type="GO" id="GO:0060021">
    <property type="term" value="P:roof of mouth development"/>
    <property type="evidence" value="ECO:0000250"/>
    <property type="project" value="UniProtKB"/>
</dbReference>
<dbReference type="GO" id="GO:0035725">
    <property type="term" value="P:sodium ion transmembrane transport"/>
    <property type="evidence" value="ECO:0000266"/>
    <property type="project" value="RGD"/>
</dbReference>
<dbReference type="GO" id="GO:0072168">
    <property type="term" value="P:specification of anterior mesonephric tubule identity"/>
    <property type="evidence" value="ECO:0000250"/>
    <property type="project" value="UniProtKB"/>
</dbReference>
<dbReference type="GO" id="GO:0072169">
    <property type="term" value="P:specification of posterior mesonephric tubule identity"/>
    <property type="evidence" value="ECO:0000250"/>
    <property type="project" value="UniProtKB"/>
</dbReference>
<dbReference type="GO" id="GO:0048863">
    <property type="term" value="P:stem cell differentiation"/>
    <property type="evidence" value="ECO:0000250"/>
    <property type="project" value="UniProtKB"/>
</dbReference>
<dbReference type="GO" id="GO:0072190">
    <property type="term" value="P:ureter urothelium development"/>
    <property type="evidence" value="ECO:0000250"/>
    <property type="project" value="UniProtKB"/>
</dbReference>
<dbReference type="GO" id="GO:0001657">
    <property type="term" value="P:ureteric bud development"/>
    <property type="evidence" value="ECO:0000250"/>
    <property type="project" value="UniProtKB"/>
</dbReference>
<dbReference type="GO" id="GO:0001655">
    <property type="term" value="P:urogenital system development"/>
    <property type="evidence" value="ECO:0000250"/>
    <property type="project" value="UniProtKB"/>
</dbReference>
<dbReference type="FunFam" id="3.30.160.60:FF:000254">
    <property type="entry name" value="Odd-skipped related transciption factor 1"/>
    <property type="match status" value="1"/>
</dbReference>
<dbReference type="FunFam" id="3.30.160.60:FF:000090">
    <property type="entry name" value="Odd-skipped-related transciption factor 2"/>
    <property type="match status" value="1"/>
</dbReference>
<dbReference type="FunFam" id="3.30.160.60:FF:000311">
    <property type="entry name" value="protein odd-skipped-related 2 isoform X1"/>
    <property type="match status" value="1"/>
</dbReference>
<dbReference type="Gene3D" id="3.30.160.60">
    <property type="entry name" value="Classic Zinc Finger"/>
    <property type="match status" value="3"/>
</dbReference>
<dbReference type="InterPro" id="IPR050717">
    <property type="entry name" value="C2H2-ZF_Transcription_Reg"/>
</dbReference>
<dbReference type="InterPro" id="IPR036236">
    <property type="entry name" value="Znf_C2H2_sf"/>
</dbReference>
<dbReference type="InterPro" id="IPR013087">
    <property type="entry name" value="Znf_C2H2_type"/>
</dbReference>
<dbReference type="PANTHER" id="PTHR14196">
    <property type="entry name" value="ODD-SKIPPED - RELATED"/>
    <property type="match status" value="1"/>
</dbReference>
<dbReference type="PANTHER" id="PTHR14196:SF5">
    <property type="entry name" value="PROTEIN ODD-SKIPPED-RELATED 1"/>
    <property type="match status" value="1"/>
</dbReference>
<dbReference type="Pfam" id="PF00096">
    <property type="entry name" value="zf-C2H2"/>
    <property type="match status" value="3"/>
</dbReference>
<dbReference type="SMART" id="SM00355">
    <property type="entry name" value="ZnF_C2H2"/>
    <property type="match status" value="3"/>
</dbReference>
<dbReference type="SUPFAM" id="SSF57667">
    <property type="entry name" value="beta-beta-alpha zinc fingers"/>
    <property type="match status" value="2"/>
</dbReference>
<dbReference type="PROSITE" id="PS00028">
    <property type="entry name" value="ZINC_FINGER_C2H2_1"/>
    <property type="match status" value="3"/>
</dbReference>
<dbReference type="PROSITE" id="PS50157">
    <property type="entry name" value="ZINC_FINGER_C2H2_2"/>
    <property type="match status" value="3"/>
</dbReference>
<feature type="chain" id="PRO_0000402805" description="Protein odd-skipped-related 1">
    <location>
        <begin position="1"/>
        <end position="266"/>
    </location>
</feature>
<feature type="zinc finger region" description="C2H2-type 1" evidence="3">
    <location>
        <begin position="175"/>
        <end position="197"/>
    </location>
</feature>
<feature type="zinc finger region" description="C2H2-type 2" evidence="3">
    <location>
        <begin position="203"/>
        <end position="225"/>
    </location>
</feature>
<feature type="zinc finger region" description="C2H2-type 3" evidence="3">
    <location>
        <begin position="231"/>
        <end position="253"/>
    </location>
</feature>
<feature type="modified residue" description="Asymmetric dimethylarginine" evidence="2">
    <location>
        <position position="116"/>
    </location>
</feature>
<organism>
    <name type="scientific">Rattus norvegicus</name>
    <name type="common">Rat</name>
    <dbReference type="NCBI Taxonomy" id="10116"/>
    <lineage>
        <taxon>Eukaryota</taxon>
        <taxon>Metazoa</taxon>
        <taxon>Chordata</taxon>
        <taxon>Craniata</taxon>
        <taxon>Vertebrata</taxon>
        <taxon>Euteleostomi</taxon>
        <taxon>Mammalia</taxon>
        <taxon>Eutheria</taxon>
        <taxon>Euarchontoglires</taxon>
        <taxon>Glires</taxon>
        <taxon>Rodentia</taxon>
        <taxon>Myomorpha</taxon>
        <taxon>Muroidea</taxon>
        <taxon>Muridae</taxon>
        <taxon>Murinae</taxon>
        <taxon>Rattus</taxon>
    </lineage>
</organism>
<sequence>MGSKTLPAPVPIHPSLQLTNYSFLQAVNGLPTVPSDHLPNLYGFSALHAVHLHQWTLGYPAMHLPRSSFSKVPGAVSSLMDARFQLPAFPWFPHVIHPKPEITAGGSGAALKTKPRFDFANLALAATQEDPTKLGRGEGPGSPAGGLGALLDVTKLSPEKKPTRGRLPSKTKKEFVCKFCGRHFTKSYNLLIHERTHTDERPYTCDICHKAFRRQDHLRDHRYIHSKEKPFKCQECGKGFCQSRTLAVHKTLHSQVKELKTSKIKC</sequence>
<gene>
    <name type="primary">Osr1</name>
    <name type="synonym">Odd1</name>
</gene>
<proteinExistence type="evidence at transcript level"/>
<comment type="function">
    <text evidence="1">Transcription factor that plays a role in the regulation of embryonic heart and urogenital development.</text>
</comment>
<comment type="subcellular location">
    <subcellularLocation>
        <location evidence="4">Nucleus</location>
    </subcellularLocation>
</comment>
<comment type="similarity">
    <text evidence="4">Belongs to the Odd C2H2-type zinc-finger protein family.</text>
</comment>